<reference key="1">
    <citation type="journal article" date="1990" name="J. Bacteriol.">
        <title>Genetic analysis of the yopE region of Yersinia spp.: identification of a novel conserved locus, yerA, regulating yopE expression.</title>
        <authorList>
            <person name="Forsberg A."/>
            <person name="Wolf-Watz H."/>
        </authorList>
    </citation>
    <scope>NUCLEOTIDE SEQUENCE [GENOMIC DNA]</scope>
    <source>
        <strain>EV 76</strain>
        <plasmid>pYV019</plasmid>
    </source>
</reference>
<reference key="2">
    <citation type="journal article" date="1998" name="Infect. Immun.">
        <title>DNA sequencing and analysis of the low-Ca2+-response plasmid pCD1 of Yersinia pestis KIM5.</title>
        <authorList>
            <person name="Perry R.D."/>
            <person name="Straley S.C."/>
            <person name="Fetherston J.D."/>
            <person name="Rose D.J."/>
            <person name="Gregor J."/>
            <person name="Blattner F.R."/>
        </authorList>
    </citation>
    <scope>NUCLEOTIDE SEQUENCE [GENOMIC DNA]</scope>
    <source>
        <strain>KIM5 / Biovar Mediaevalis</strain>
        <plasmid>pCD1</plasmid>
    </source>
</reference>
<reference key="3">
    <citation type="journal article" date="1998" name="J. Bacteriol.">
        <title>Structural organization of virulence-associated plasmids of Yersinia pestis.</title>
        <authorList>
            <person name="Hu P."/>
            <person name="Elliott J."/>
            <person name="McCready P."/>
            <person name="Skowronski E."/>
            <person name="Garnes J."/>
            <person name="Kobayashi A."/>
            <person name="Brubaker R.R."/>
            <person name="Garcia E."/>
        </authorList>
    </citation>
    <scope>NUCLEOTIDE SEQUENCE [GENOMIC DNA]</scope>
    <source>
        <strain>KIM5 / Biovar Mediaevalis</strain>
        <plasmid>pCD1</plasmid>
    </source>
</reference>
<reference key="4">
    <citation type="journal article" date="2001" name="Nature">
        <title>Genome sequence of Yersinia pestis, the causative agent of plague.</title>
        <authorList>
            <person name="Parkhill J."/>
            <person name="Wren B.W."/>
            <person name="Thomson N.R."/>
            <person name="Titball R.W."/>
            <person name="Holden M.T.G."/>
            <person name="Prentice M.B."/>
            <person name="Sebaihia M."/>
            <person name="James K.D."/>
            <person name="Churcher C.M."/>
            <person name="Mungall K.L."/>
            <person name="Baker S."/>
            <person name="Basham D."/>
            <person name="Bentley S.D."/>
            <person name="Brooks K."/>
            <person name="Cerdeno-Tarraga A.-M."/>
            <person name="Chillingworth T."/>
            <person name="Cronin A."/>
            <person name="Davies R.M."/>
            <person name="Davis P."/>
            <person name="Dougan G."/>
            <person name="Feltwell T."/>
            <person name="Hamlin N."/>
            <person name="Holroyd S."/>
            <person name="Jagels K."/>
            <person name="Karlyshev A.V."/>
            <person name="Leather S."/>
            <person name="Moule S."/>
            <person name="Oyston P.C.F."/>
            <person name="Quail M.A."/>
            <person name="Rutherford K.M."/>
            <person name="Simmonds M."/>
            <person name="Skelton J."/>
            <person name="Stevens K."/>
            <person name="Whitehead S."/>
            <person name="Barrell B.G."/>
        </authorList>
    </citation>
    <scope>NUCLEOTIDE SEQUENCE [LARGE SCALE GENOMIC DNA]</scope>
    <source>
        <strain>CO-92 / Biovar Orientalis</strain>
        <plasmid>pCD1</plasmid>
    </source>
</reference>
<reference key="5">
    <citation type="journal article" date="2004" name="DNA Res.">
        <title>Complete genome sequence of Yersinia pestis strain 91001, an isolate avirulent to humans.</title>
        <authorList>
            <person name="Song Y."/>
            <person name="Tong Z."/>
            <person name="Wang J."/>
            <person name="Wang L."/>
            <person name="Guo Z."/>
            <person name="Han Y."/>
            <person name="Zhang J."/>
            <person name="Pei D."/>
            <person name="Zhou D."/>
            <person name="Qin H."/>
            <person name="Pang X."/>
            <person name="Han Y."/>
            <person name="Zhai J."/>
            <person name="Li M."/>
            <person name="Cui B."/>
            <person name="Qi Z."/>
            <person name="Jin L."/>
            <person name="Dai R."/>
            <person name="Chen F."/>
            <person name="Li S."/>
            <person name="Ye C."/>
            <person name="Du Z."/>
            <person name="Lin W."/>
            <person name="Wang J."/>
            <person name="Yu J."/>
            <person name="Yang H."/>
            <person name="Wang J."/>
            <person name="Huang P."/>
            <person name="Yang R."/>
        </authorList>
    </citation>
    <scope>NUCLEOTIDE SEQUENCE [LARGE SCALE GENOMIC DNA]</scope>
    <source>
        <strain>91001 / Biovar Mediaevalis</strain>
        <plasmid>pCD1</plasmid>
    </source>
</reference>
<gene>
    <name type="primary">yopE</name>
    <name type="synonym">yop25</name>
    <name type="ordered locus">YPCD1.06</name>
    <name type="ordered locus">y5068</name>
    <name type="ordered locus">y0077</name>
    <name type="ordered locus">YP_pCD81</name>
</gene>
<name>YOPE_YERPE</name>
<accession>P31493</accession>
<sequence>MKISSFISTSLPLPTSVSGSSSVGEMSGRSVSQQTSDQYANNLAGRTESPQGSSLASRIIERLSSVAHSVIGFIQRMFSEGSHKPVVTPAPTPAQMPSPTSFSDSIKQLAAETLPKYMQQLNSLDAEMLQKNHDQFATGSGPLRGSITQCQGLMQFCGGELQAEASAILNTPVCGIPFSQWGTIGGAASAYVASGVDLTQAANEIKGLAQQMQKLLSLM</sequence>
<geneLocation type="plasmid">
    <name>pCD1</name>
</geneLocation>
<geneLocation type="plasmid">
    <name>pYV019</name>
</geneLocation>
<evidence type="ECO:0000255" key="1">
    <source>
        <dbReference type="PROSITE-ProRule" id="PRU01404"/>
    </source>
</evidence>
<evidence type="ECO:0000256" key="2">
    <source>
        <dbReference type="SAM" id="MobiDB-lite"/>
    </source>
</evidence>
<evidence type="ECO:0000305" key="3"/>
<evidence type="ECO:0007829" key="4">
    <source>
        <dbReference type="PDB" id="1HY5"/>
    </source>
</evidence>
<comment type="function">
    <text>Essential virulence determinant; cytotoxic effector, involved in resistance to phagocytosis.</text>
</comment>
<comment type="subcellular location">
    <subcellularLocation>
        <location>Cell outer membrane</location>
    </subcellularLocation>
</comment>
<comment type="induction">
    <text>At 37 degrees Celsius in the absence of calcium.</text>
</comment>
<comment type="miscellaneous">
    <text>N-terminal is important for export, C-terminal is indispensable for virulence.</text>
</comment>
<comment type="similarity">
    <text evidence="3">Belongs to the YopE family.</text>
</comment>
<protein>
    <recommendedName>
        <fullName>Outer membrane virulence protein YopE</fullName>
    </recommendedName>
</protein>
<keyword id="KW-0002">3D-structure</keyword>
<keyword id="KW-0998">Cell outer membrane</keyword>
<keyword id="KW-0343">GTPase activation</keyword>
<keyword id="KW-0472">Membrane</keyword>
<keyword id="KW-0614">Plasmid</keyword>
<keyword id="KW-1185">Reference proteome</keyword>
<keyword id="KW-0843">Virulence</keyword>
<dbReference type="EMBL" id="M34279">
    <property type="protein sequence ID" value="AAA27672.1"/>
    <property type="molecule type" value="Genomic_DNA"/>
</dbReference>
<dbReference type="EMBL" id="AF074612">
    <property type="protein sequence ID" value="AAC69818.1"/>
    <property type="molecule type" value="Genomic_DNA"/>
</dbReference>
<dbReference type="EMBL" id="AF053946">
    <property type="protein sequence ID" value="AAC62587.1"/>
    <property type="molecule type" value="Genomic_DNA"/>
</dbReference>
<dbReference type="EMBL" id="AL117189">
    <property type="protein sequence ID" value="CAB54883.1"/>
    <property type="molecule type" value="Genomic_DNA"/>
</dbReference>
<dbReference type="EMBL" id="AE017043">
    <property type="protein sequence ID" value="AAS58592.1"/>
    <property type="molecule type" value="Genomic_DNA"/>
</dbReference>
<dbReference type="PIR" id="T43605">
    <property type="entry name" value="T43605"/>
</dbReference>
<dbReference type="RefSeq" id="NP_395143.1">
    <property type="nucleotide sequence ID" value="NC_003131.1"/>
</dbReference>
<dbReference type="RefSeq" id="NP_857762.1">
    <property type="nucleotide sequence ID" value="NC_004836.1"/>
</dbReference>
<dbReference type="RefSeq" id="NP_857967.1">
    <property type="nucleotide sequence ID" value="NC_004839.1"/>
</dbReference>
<dbReference type="RefSeq" id="WP_002229754.1">
    <property type="nucleotide sequence ID" value="NZ_WUCM01000133.1"/>
</dbReference>
<dbReference type="PDB" id="1HY5">
    <property type="method" value="X-ray"/>
    <property type="resolution" value="2.25 A"/>
    <property type="chains" value="A/B=90-219"/>
</dbReference>
<dbReference type="PDBsum" id="1HY5"/>
<dbReference type="BMRB" id="P31493"/>
<dbReference type="SMR" id="P31493"/>
<dbReference type="IntAct" id="P31493">
    <property type="interactions" value="2"/>
</dbReference>
<dbReference type="MINT" id="P31493"/>
<dbReference type="PaxDb" id="214092-5832429"/>
<dbReference type="DNASU" id="1149332"/>
<dbReference type="EnsemblBacteria" id="AAS58592">
    <property type="protein sequence ID" value="AAS58592"/>
    <property type="gene ID" value="YP_pCD81"/>
</dbReference>
<dbReference type="KEGG" id="ype:YPCD1.06"/>
<dbReference type="KEGG" id="ypm:YP_pCD81"/>
<dbReference type="PATRIC" id="fig|214092.21.peg.8"/>
<dbReference type="eggNOG" id="COG5599">
    <property type="taxonomic scope" value="Bacteria"/>
</dbReference>
<dbReference type="HOGENOM" id="CLU_121002_0_0_6"/>
<dbReference type="OrthoDB" id="5918307at2"/>
<dbReference type="EvolutionaryTrace" id="P31493"/>
<dbReference type="Proteomes" id="UP000000815">
    <property type="component" value="Plasmid pCD1"/>
</dbReference>
<dbReference type="Proteomes" id="UP000001019">
    <property type="component" value="Plasmid pCD1"/>
</dbReference>
<dbReference type="GO" id="GO:0009279">
    <property type="term" value="C:cell outer membrane"/>
    <property type="evidence" value="ECO:0007669"/>
    <property type="project" value="UniProtKB-SubCell"/>
</dbReference>
<dbReference type="GO" id="GO:0005096">
    <property type="term" value="F:GTPase activator activity"/>
    <property type="evidence" value="ECO:0007669"/>
    <property type="project" value="InterPro"/>
</dbReference>
<dbReference type="GO" id="GO:0050765">
    <property type="term" value="P:negative regulation of phagocytosis"/>
    <property type="evidence" value="ECO:0000315"/>
    <property type="project" value="CACAO"/>
</dbReference>
<dbReference type="GO" id="GO:0141030">
    <property type="term" value="P:symbiont-mediated perturbation of host actin cytoskeleton via filamentous actin depolymerization"/>
    <property type="evidence" value="ECO:0000269"/>
    <property type="project" value="SigSci"/>
</dbReference>
<dbReference type="CDD" id="cd00219">
    <property type="entry name" value="ToxGAP"/>
    <property type="match status" value="1"/>
</dbReference>
<dbReference type="FunFam" id="1.20.120.260:FF:000001">
    <property type="entry name" value="Outer membrane virulence protein YopE"/>
    <property type="match status" value="1"/>
</dbReference>
<dbReference type="Gene3D" id="1.20.120.260">
    <property type="entry name" value="Virulence factor YopE uncharacterised domain"/>
    <property type="match status" value="1"/>
</dbReference>
<dbReference type="InterPro" id="IPR003537">
    <property type="entry name" value="YopE-like"/>
</dbReference>
<dbReference type="InterPro" id="IPR014773">
    <property type="entry name" value="YopE_GAP_dom"/>
</dbReference>
<dbReference type="InterPro" id="IPR037168">
    <property type="entry name" value="YopE_GAP_dom_sf"/>
</dbReference>
<dbReference type="InterPro" id="IPR015110">
    <property type="entry name" value="YopE_N_dom"/>
</dbReference>
<dbReference type="Pfam" id="PF03545">
    <property type="entry name" value="YopE"/>
    <property type="match status" value="1"/>
</dbReference>
<dbReference type="Pfam" id="PF09020">
    <property type="entry name" value="YopE_N"/>
    <property type="match status" value="1"/>
</dbReference>
<dbReference type="PRINTS" id="PR01372">
    <property type="entry name" value="YERSINIAYOPE"/>
</dbReference>
<dbReference type="SUPFAM" id="SSF47233">
    <property type="entry name" value="Bacterial GAP domain"/>
    <property type="match status" value="1"/>
</dbReference>
<dbReference type="SUPFAM" id="SSF69635">
    <property type="entry name" value="Type III secretory system chaperone-like"/>
    <property type="match status" value="1"/>
</dbReference>
<dbReference type="PROSITE" id="PS52059">
    <property type="entry name" value="BACT_RHOGAP"/>
    <property type="match status" value="1"/>
</dbReference>
<feature type="chain" id="PRO_0000066366" description="Outer membrane virulence protein YopE">
    <location>
        <begin position="1"/>
        <end position="219"/>
    </location>
</feature>
<feature type="domain" description="Bacterial Rho-GAP" evidence="1">
    <location>
        <begin position="101"/>
        <end position="219"/>
    </location>
</feature>
<feature type="region of interest" description="Disordered" evidence="2">
    <location>
        <begin position="1"/>
        <end position="37"/>
    </location>
</feature>
<feature type="compositionally biased region" description="Low complexity" evidence="2">
    <location>
        <begin position="8"/>
        <end position="32"/>
    </location>
</feature>
<feature type="site" description="Arginine finger; crucial for GTP hydrolysis by stabilizing the transition state" evidence="1">
    <location>
        <position position="144"/>
    </location>
</feature>
<feature type="helix" evidence="4">
    <location>
        <begin position="102"/>
        <end position="121"/>
    </location>
</feature>
<feature type="helix" evidence="4">
    <location>
        <begin position="126"/>
        <end position="136"/>
    </location>
</feature>
<feature type="helix" evidence="4">
    <location>
        <begin position="142"/>
        <end position="156"/>
    </location>
</feature>
<feature type="helix" evidence="4">
    <location>
        <begin position="159"/>
        <end position="170"/>
    </location>
</feature>
<feature type="strand" evidence="4">
    <location>
        <begin position="171"/>
        <end position="173"/>
    </location>
</feature>
<feature type="helix" evidence="4">
    <location>
        <begin position="178"/>
        <end position="182"/>
    </location>
</feature>
<feature type="strand" evidence="4">
    <location>
        <begin position="184"/>
        <end position="186"/>
    </location>
</feature>
<feature type="helix" evidence="4">
    <location>
        <begin position="187"/>
        <end position="192"/>
    </location>
</feature>
<feature type="turn" evidence="4">
    <location>
        <begin position="193"/>
        <end position="195"/>
    </location>
</feature>
<feature type="helix" evidence="4">
    <location>
        <begin position="199"/>
        <end position="211"/>
    </location>
</feature>
<feature type="helix" evidence="4">
    <location>
        <begin position="213"/>
        <end position="218"/>
    </location>
</feature>
<proteinExistence type="evidence at protein level"/>
<organism>
    <name type="scientific">Yersinia pestis</name>
    <dbReference type="NCBI Taxonomy" id="632"/>
    <lineage>
        <taxon>Bacteria</taxon>
        <taxon>Pseudomonadati</taxon>
        <taxon>Pseudomonadota</taxon>
        <taxon>Gammaproteobacteria</taxon>
        <taxon>Enterobacterales</taxon>
        <taxon>Yersiniaceae</taxon>
        <taxon>Yersinia</taxon>
    </lineage>
</organism>